<gene>
    <name type="primary">TFRC</name>
</gene>
<feature type="chain" id="PRO_0000237616" description="Transferrin receptor protein 1">
    <location>
        <begin position="1"/>
        <end position="768"/>
    </location>
</feature>
<feature type="topological domain" description="Cytoplasmic" evidence="4">
    <location>
        <begin position="1"/>
        <end position="68"/>
    </location>
</feature>
<feature type="transmembrane region" description="Helical" evidence="4">
    <location>
        <begin position="69"/>
        <end position="89"/>
    </location>
</feature>
<feature type="topological domain" description="Extracellular" evidence="4">
    <location>
        <begin position="90"/>
        <end position="768"/>
    </location>
</feature>
<feature type="domain" description="PA">
    <location>
        <begin position="231"/>
        <end position="321"/>
    </location>
</feature>
<feature type="region of interest" description="Mediates interaction with SH3BP4" evidence="1">
    <location>
        <begin position="1"/>
        <end position="70"/>
    </location>
</feature>
<feature type="region of interest" description="Ligand-binding" evidence="1">
    <location>
        <begin position="577"/>
        <end position="768"/>
    </location>
</feature>
<feature type="short sequence motif" description="Endocytosis signal">
    <location>
        <begin position="20"/>
        <end position="23"/>
    </location>
</feature>
<feature type="short sequence motif" description="Stop-transfer sequence">
    <location>
        <begin position="61"/>
        <end position="64"/>
    </location>
</feature>
<feature type="short sequence motif" description="Cell attachment site" evidence="4">
    <location>
        <begin position="654"/>
        <end position="656"/>
    </location>
</feature>
<feature type="modified residue" description="Phosphoserine" evidence="2">
    <location>
        <position position="10"/>
    </location>
</feature>
<feature type="modified residue" description="Phosphoserine" evidence="3">
    <location>
        <position position="19"/>
    </location>
</feature>
<feature type="modified residue" description="Phosphotyrosine" evidence="2">
    <location>
        <position position="20"/>
    </location>
</feature>
<feature type="modified residue" description="Phosphothreonine" evidence="2">
    <location>
        <position position="21"/>
    </location>
</feature>
<feature type="modified residue" description="Phosphoserine" evidence="2">
    <location>
        <position position="24"/>
    </location>
</feature>
<feature type="lipid moiety-binding region" description="S-palmitoyl cysteine" evidence="1">
    <location>
        <position position="70"/>
    </location>
</feature>
<feature type="glycosylation site" description="N-linked (GlcNAc...) asparagine" evidence="2">
    <location>
        <position position="259"/>
    </location>
</feature>
<feature type="glycosylation site" description="N-linked (GlcNAc...) asparagine" evidence="2">
    <location>
        <position position="325"/>
    </location>
</feature>
<feature type="glycosylation site" description="N-linked (GlcNAc...) asparagine" evidence="4">
    <location>
        <position position="730"/>
    </location>
</feature>
<feature type="glycosylation site" description="N-linked (GlcNAc...) asparagine" evidence="2">
    <location>
        <position position="735"/>
    </location>
</feature>
<feature type="disulfide bond" description="Interchain" evidence="1">
    <location>
        <position position="92"/>
    </location>
</feature>
<feature type="disulfide bond" description="Interchain" evidence="1">
    <location>
        <position position="101"/>
    </location>
</feature>
<proteinExistence type="evidence at transcript level"/>
<protein>
    <recommendedName>
        <fullName>Transferrin receptor protein 1</fullName>
        <shortName>TR</shortName>
        <shortName>TfR</shortName>
        <shortName>TfR1</shortName>
        <shortName>Trfr</shortName>
    </recommendedName>
    <cdAntigenName>CD71</cdAntigenName>
</protein>
<dbReference type="EMBL" id="AF416763">
    <property type="protein sequence ID" value="AAN09749.1"/>
    <property type="molecule type" value="mRNA"/>
</dbReference>
<dbReference type="RefSeq" id="NP_999166.1">
    <property type="nucleotide sequence ID" value="NM_214001.1"/>
</dbReference>
<dbReference type="SMR" id="Q8HZV3"/>
<dbReference type="FunCoup" id="Q8HZV3">
    <property type="interactions" value="514"/>
</dbReference>
<dbReference type="STRING" id="9823.ENSSSCP00000029501"/>
<dbReference type="MEROPS" id="M28.972"/>
<dbReference type="GlyCosmos" id="Q8HZV3">
    <property type="glycosylation" value="4 sites, No reported glycans"/>
</dbReference>
<dbReference type="GlyGen" id="Q8HZV3">
    <property type="glycosylation" value="4 sites"/>
</dbReference>
<dbReference type="PaxDb" id="9823-ENSSSCP00000029501"/>
<dbReference type="PeptideAtlas" id="Q8HZV3"/>
<dbReference type="Ensembl" id="ENSSSCT00015094782.1">
    <property type="protein sequence ID" value="ENSSSCP00015038877.1"/>
    <property type="gene ID" value="ENSSSCG00015069917.1"/>
</dbReference>
<dbReference type="Ensembl" id="ENSSSCT00025040290.1">
    <property type="protein sequence ID" value="ENSSSCP00025017146.1"/>
    <property type="gene ID" value="ENSSSCG00025029620.1"/>
</dbReference>
<dbReference type="Ensembl" id="ENSSSCT00040042676.1">
    <property type="protein sequence ID" value="ENSSSCP00040017879.1"/>
    <property type="gene ID" value="ENSSSCG00040031412.1"/>
</dbReference>
<dbReference type="Ensembl" id="ENSSSCT00045017888.1">
    <property type="protein sequence ID" value="ENSSSCP00045012318.1"/>
    <property type="gene ID" value="ENSSSCG00045010359.1"/>
</dbReference>
<dbReference type="Ensembl" id="ENSSSCT00050086561.1">
    <property type="protein sequence ID" value="ENSSSCP00050037146.1"/>
    <property type="gene ID" value="ENSSSCG00050063573.1"/>
</dbReference>
<dbReference type="Ensembl" id="ENSSSCT00055011713.1">
    <property type="protein sequence ID" value="ENSSSCP00055009275.1"/>
    <property type="gene ID" value="ENSSSCG00055005971.1"/>
</dbReference>
<dbReference type="Ensembl" id="ENSSSCT00065003468.1">
    <property type="protein sequence ID" value="ENSSSCP00065001260.1"/>
    <property type="gene ID" value="ENSSSCG00065002628.1"/>
</dbReference>
<dbReference type="Ensembl" id="ENSSSCT00070023963.1">
    <property type="protein sequence ID" value="ENSSSCP00070019815.1"/>
    <property type="gene ID" value="ENSSSCG00070011774.1"/>
</dbReference>
<dbReference type="Ensembl" id="ENSSSCT00070023968.1">
    <property type="protein sequence ID" value="ENSSSCP00070019819.1"/>
    <property type="gene ID" value="ENSSSCG00070011774.1"/>
</dbReference>
<dbReference type="Ensembl" id="ENSSSCT00070023975.1">
    <property type="protein sequence ID" value="ENSSSCP00070019827.1"/>
    <property type="gene ID" value="ENSSSCG00070011774.1"/>
</dbReference>
<dbReference type="Ensembl" id="ENSSSCT00070023978.1">
    <property type="protein sequence ID" value="ENSSSCP00070019830.1"/>
    <property type="gene ID" value="ENSSSCG00070011774.1"/>
</dbReference>
<dbReference type="Ensembl" id="ENSSSCT00070023989.1">
    <property type="protein sequence ID" value="ENSSSCP00070019840.1"/>
    <property type="gene ID" value="ENSSSCG00070011774.1"/>
</dbReference>
<dbReference type="Ensembl" id="ENSSSCT00070024000.1">
    <property type="protein sequence ID" value="ENSSSCP00070019851.1"/>
    <property type="gene ID" value="ENSSSCG00070011774.1"/>
</dbReference>
<dbReference type="Ensembl" id="ENSSSCT00070024010.1">
    <property type="protein sequence ID" value="ENSSSCP00070019860.1"/>
    <property type="gene ID" value="ENSSSCG00070011774.1"/>
</dbReference>
<dbReference type="Ensembl" id="ENSSSCT00105008583">
    <property type="protein sequence ID" value="ENSSSCP00105006271"/>
    <property type="gene ID" value="ENSSSCG00105004243"/>
</dbReference>
<dbReference type="GeneID" id="397062"/>
<dbReference type="KEGG" id="ssc:397062"/>
<dbReference type="CTD" id="7037"/>
<dbReference type="eggNOG" id="KOG2195">
    <property type="taxonomic scope" value="Eukaryota"/>
</dbReference>
<dbReference type="InParanoid" id="Q8HZV3"/>
<dbReference type="OrthoDB" id="5841748at2759"/>
<dbReference type="Reactome" id="R-SSC-432722">
    <property type="pathway name" value="Golgi Associated Vesicle Biogenesis"/>
</dbReference>
<dbReference type="Reactome" id="R-SSC-8856825">
    <property type="pathway name" value="Cargo recognition for clathrin-mediated endocytosis"/>
</dbReference>
<dbReference type="Reactome" id="R-SSC-8856828">
    <property type="pathway name" value="Clathrin-mediated endocytosis"/>
</dbReference>
<dbReference type="Reactome" id="R-SSC-8980692">
    <property type="pathway name" value="RHOA GTPase cycle"/>
</dbReference>
<dbReference type="Reactome" id="R-SSC-9013026">
    <property type="pathway name" value="RHOB GTPase cycle"/>
</dbReference>
<dbReference type="Reactome" id="R-SSC-9013106">
    <property type="pathway name" value="RHOC GTPase cycle"/>
</dbReference>
<dbReference type="Reactome" id="R-SSC-9013148">
    <property type="pathway name" value="CDC42 GTPase cycle"/>
</dbReference>
<dbReference type="Reactome" id="R-SSC-9013149">
    <property type="pathway name" value="RAC1 GTPase cycle"/>
</dbReference>
<dbReference type="Reactome" id="R-SSC-9013404">
    <property type="pathway name" value="RAC2 GTPase cycle"/>
</dbReference>
<dbReference type="Reactome" id="R-SSC-9013406">
    <property type="pathway name" value="RHOQ GTPase cycle"/>
</dbReference>
<dbReference type="Reactome" id="R-SSC-9013407">
    <property type="pathway name" value="RHOH GTPase cycle"/>
</dbReference>
<dbReference type="Reactome" id="R-SSC-9013408">
    <property type="pathway name" value="RHOG GTPase cycle"/>
</dbReference>
<dbReference type="Reactome" id="R-SSC-9013423">
    <property type="pathway name" value="RAC3 GTPase cycle"/>
</dbReference>
<dbReference type="Reactome" id="R-SSC-917977">
    <property type="pathway name" value="Transferrin endocytosis and recycling"/>
</dbReference>
<dbReference type="Reactome" id="R-SSC-9696270">
    <property type="pathway name" value="RND2 GTPase cycle"/>
</dbReference>
<dbReference type="Reactome" id="R-SSC-9696273">
    <property type="pathway name" value="RND1 GTPase cycle"/>
</dbReference>
<dbReference type="Proteomes" id="UP000008227">
    <property type="component" value="Unplaced"/>
</dbReference>
<dbReference type="Proteomes" id="UP000314985">
    <property type="component" value="Chromosome 13"/>
</dbReference>
<dbReference type="Proteomes" id="UP000694570">
    <property type="component" value="Unplaced"/>
</dbReference>
<dbReference type="Proteomes" id="UP000694571">
    <property type="component" value="Unplaced"/>
</dbReference>
<dbReference type="Proteomes" id="UP000694720">
    <property type="component" value="Unplaced"/>
</dbReference>
<dbReference type="Proteomes" id="UP000694722">
    <property type="component" value="Unplaced"/>
</dbReference>
<dbReference type="Proteomes" id="UP000694723">
    <property type="component" value="Unplaced"/>
</dbReference>
<dbReference type="Proteomes" id="UP000694724">
    <property type="component" value="Unplaced"/>
</dbReference>
<dbReference type="Proteomes" id="UP000694725">
    <property type="component" value="Unplaced"/>
</dbReference>
<dbReference type="Proteomes" id="UP000694726">
    <property type="component" value="Unplaced"/>
</dbReference>
<dbReference type="Proteomes" id="UP000694727">
    <property type="component" value="Unplaced"/>
</dbReference>
<dbReference type="Proteomes" id="UP000694728">
    <property type="component" value="Unplaced"/>
</dbReference>
<dbReference type="Bgee" id="ENSSSCG00000011848">
    <property type="expression patterns" value="Expressed in heart left ventricle and 45 other cell types or tissues"/>
</dbReference>
<dbReference type="ExpressionAtlas" id="Q8HZV3">
    <property type="expression patterns" value="baseline and differential"/>
</dbReference>
<dbReference type="GO" id="GO:0009897">
    <property type="term" value="C:external side of plasma membrane"/>
    <property type="evidence" value="ECO:0000318"/>
    <property type="project" value="GO_Central"/>
</dbReference>
<dbReference type="GO" id="GO:0042470">
    <property type="term" value="C:melanosome"/>
    <property type="evidence" value="ECO:0007669"/>
    <property type="project" value="UniProtKB-SubCell"/>
</dbReference>
<dbReference type="GO" id="GO:0004998">
    <property type="term" value="F:transferrin receptor activity"/>
    <property type="evidence" value="ECO:0000250"/>
    <property type="project" value="UniProtKB"/>
</dbReference>
<dbReference type="GO" id="GO:0006879">
    <property type="term" value="P:intracellular iron ion homeostasis"/>
    <property type="evidence" value="ECO:0000318"/>
    <property type="project" value="GO_Central"/>
</dbReference>
<dbReference type="GO" id="GO:0006826">
    <property type="term" value="P:iron ion transport"/>
    <property type="evidence" value="ECO:0000318"/>
    <property type="project" value="GO_Central"/>
</dbReference>
<dbReference type="GO" id="GO:0030890">
    <property type="term" value="P:positive regulation of B cell proliferation"/>
    <property type="evidence" value="ECO:0000250"/>
    <property type="project" value="UniProtKB"/>
</dbReference>
<dbReference type="GO" id="GO:0045830">
    <property type="term" value="P:positive regulation of isotype switching"/>
    <property type="evidence" value="ECO:0000250"/>
    <property type="project" value="UniProtKB"/>
</dbReference>
<dbReference type="GO" id="GO:0042102">
    <property type="term" value="P:positive regulation of T cell proliferation"/>
    <property type="evidence" value="ECO:0000250"/>
    <property type="project" value="UniProtKB"/>
</dbReference>
<dbReference type="GO" id="GO:0031623">
    <property type="term" value="P:receptor internalization"/>
    <property type="evidence" value="ECO:0000250"/>
    <property type="project" value="UniProtKB"/>
</dbReference>
<dbReference type="GO" id="GO:0033572">
    <property type="term" value="P:transferrin transport"/>
    <property type="evidence" value="ECO:0000250"/>
    <property type="project" value="UniProtKB"/>
</dbReference>
<dbReference type="CDD" id="cd09848">
    <property type="entry name" value="M28_TfR"/>
    <property type="match status" value="1"/>
</dbReference>
<dbReference type="CDD" id="cd02128">
    <property type="entry name" value="PA_TfR"/>
    <property type="match status" value="1"/>
</dbReference>
<dbReference type="FunFam" id="1.20.930.40:FF:000002">
    <property type="entry name" value="Transferrin receptor protein 1"/>
    <property type="match status" value="1"/>
</dbReference>
<dbReference type="FunFam" id="3.40.630.10:FF:000045">
    <property type="entry name" value="Transferrin receptor protein 1"/>
    <property type="match status" value="1"/>
</dbReference>
<dbReference type="FunFam" id="3.50.30.30:FF:000010">
    <property type="entry name" value="Transferrin receptor protein 1"/>
    <property type="match status" value="1"/>
</dbReference>
<dbReference type="Gene3D" id="3.50.30.30">
    <property type="match status" value="1"/>
</dbReference>
<dbReference type="Gene3D" id="1.20.930.40">
    <property type="entry name" value="Transferrin receptor-like, dimerisation domain"/>
    <property type="match status" value="1"/>
</dbReference>
<dbReference type="Gene3D" id="3.40.630.10">
    <property type="entry name" value="Zn peptidases"/>
    <property type="match status" value="1"/>
</dbReference>
<dbReference type="InterPro" id="IPR046450">
    <property type="entry name" value="PA_dom_sf"/>
</dbReference>
<dbReference type="InterPro" id="IPR003137">
    <property type="entry name" value="PA_domain"/>
</dbReference>
<dbReference type="InterPro" id="IPR007484">
    <property type="entry name" value="Peptidase_M28"/>
</dbReference>
<dbReference type="InterPro" id="IPR039373">
    <property type="entry name" value="Peptidase_M28B"/>
</dbReference>
<dbReference type="InterPro" id="IPR007365">
    <property type="entry name" value="TFR-like_dimer_dom"/>
</dbReference>
<dbReference type="InterPro" id="IPR036757">
    <property type="entry name" value="TFR-like_dimer_dom_sf"/>
</dbReference>
<dbReference type="InterPro" id="IPR037324">
    <property type="entry name" value="TfR1/2_PA"/>
</dbReference>
<dbReference type="PANTHER" id="PTHR10404">
    <property type="entry name" value="N-ACETYLATED-ALPHA-LINKED ACIDIC DIPEPTIDASE"/>
    <property type="match status" value="1"/>
</dbReference>
<dbReference type="PANTHER" id="PTHR10404:SF26">
    <property type="entry name" value="TRANSFERRIN RECEPTOR PROTEIN 1"/>
    <property type="match status" value="1"/>
</dbReference>
<dbReference type="Pfam" id="PF02225">
    <property type="entry name" value="PA"/>
    <property type="match status" value="1"/>
</dbReference>
<dbReference type="Pfam" id="PF04389">
    <property type="entry name" value="Peptidase_M28"/>
    <property type="match status" value="1"/>
</dbReference>
<dbReference type="Pfam" id="PF04253">
    <property type="entry name" value="TFR_dimer"/>
    <property type="match status" value="1"/>
</dbReference>
<dbReference type="SUPFAM" id="SSF52025">
    <property type="entry name" value="PA domain"/>
    <property type="match status" value="1"/>
</dbReference>
<dbReference type="SUPFAM" id="SSF47672">
    <property type="entry name" value="Transferrin receptor-like dimerisation domain"/>
    <property type="match status" value="1"/>
</dbReference>
<dbReference type="SUPFAM" id="SSF53187">
    <property type="entry name" value="Zn-dependent exopeptidases"/>
    <property type="match status" value="1"/>
</dbReference>
<organism>
    <name type="scientific">Sus scrofa</name>
    <name type="common">Pig</name>
    <dbReference type="NCBI Taxonomy" id="9823"/>
    <lineage>
        <taxon>Eukaryota</taxon>
        <taxon>Metazoa</taxon>
        <taxon>Chordata</taxon>
        <taxon>Craniata</taxon>
        <taxon>Vertebrata</taxon>
        <taxon>Euteleostomi</taxon>
        <taxon>Mammalia</taxon>
        <taxon>Eutheria</taxon>
        <taxon>Laurasiatheria</taxon>
        <taxon>Artiodactyla</taxon>
        <taxon>Suina</taxon>
        <taxon>Suidae</taxon>
        <taxon>Sus</taxon>
    </lineage>
</organism>
<keyword id="KW-1003">Cell membrane</keyword>
<keyword id="KW-1015">Disulfide bond</keyword>
<keyword id="KW-0254">Endocytosis</keyword>
<keyword id="KW-0325">Glycoprotein</keyword>
<keyword id="KW-0449">Lipoprotein</keyword>
<keyword id="KW-0472">Membrane</keyword>
<keyword id="KW-0564">Palmitate</keyword>
<keyword id="KW-0597">Phosphoprotein</keyword>
<keyword id="KW-0675">Receptor</keyword>
<keyword id="KW-1185">Reference proteome</keyword>
<keyword id="KW-0735">Signal-anchor</keyword>
<keyword id="KW-0812">Transmembrane</keyword>
<keyword id="KW-1133">Transmembrane helix</keyword>
<evidence type="ECO:0000250" key="1"/>
<evidence type="ECO:0000250" key="2">
    <source>
        <dbReference type="UniProtKB" id="P02786"/>
    </source>
</evidence>
<evidence type="ECO:0000250" key="3">
    <source>
        <dbReference type="UniProtKB" id="Q62351"/>
    </source>
</evidence>
<evidence type="ECO:0000255" key="4"/>
<evidence type="ECO:0000305" key="5"/>
<comment type="function">
    <text evidence="2 3">Cellular uptake of iron occurs via receptor-mediated endocytosis of ligand-occupied transferrin receptor into specialized endosomes (By similarity). Endosomal acidification leads to iron release. The apotransferrin-receptor complex is then recycled to the cell surface with a return to neutral pH and the concomitant loss of affinity of apotransferrin for its receptor. Transferrin receptor is necessary for development of erythrocytes and the nervous system (By similarity). Positively regulates T and B cell proliferation through iron uptake (By similarity). Acts as a lipid sensor that regulates mitochondrial fusion by regulating activation of the JNK pathway (By similarity). When dietary levels of stearate (C18:0) are low, promotes activation of the JNK pathway, resulting in HUWE1-mediated ubiquitination and subsequent degradation of the mitofusin MFN2 and inhibition of mitochondrial fusion (By similarity). When dietary levels of stearate (C18:0) are high, TFRC stearoylation inhibits activation of the JNK pathway and thus degradation of the mitofusin MFN2 (By similarity). Mediates uptake of NICOL1 into fibroblasts where it may regulate extracellular matrix production (By similarity).</text>
</comment>
<comment type="subunit">
    <text evidence="1 2">Homodimer; disulfide-linked. Binds one transferrin or HFE molecule per subunit. Interacts with SH3BP4 (By similarity). Interacts with SH3BP3. Interacts with STEAP3; facilitates TFRC endocytosis in erythroid precursor cells (By similarity).</text>
</comment>
<comment type="subcellular location">
    <subcellularLocation>
        <location evidence="2">Cell membrane</location>
        <topology evidence="2">Single-pass type II membrane protein</topology>
    </subcellularLocation>
    <subcellularLocation>
        <location evidence="2">Melanosome</location>
    </subcellularLocation>
</comment>
<comment type="PTM">
    <text evidence="2">Stearoylated by ZDHHC6 which inhibits TFRC-mediated activation of the JNK pathway and promotes mitochondrial fragmentation (By similarity). Stearoylation does not affect iron uptake (By similarity).</text>
</comment>
<comment type="similarity">
    <text evidence="5">Belongs to the peptidase M28 family. M28B subfamily.</text>
</comment>
<sequence length="768" mass="86122">MMDQARSAFSSLFGGEPLSYTRFSLARQVDGDNSHVEMKLAADEEENVDSNTRSNHIGVAKPKRLNGYVCYGIIAVITFFLIGFMIGYLAYCKRVESKTDCKTLVPTEPSETEETETFEAENFPQTPRLFWADLKILLSKGLDTTDFTRTIKMLNEDYAPREAGSQKDESLGFFIENQFREFKLSKVWHDEHFVKIQVKGSNAENSVTLVNTDSNSLVYPVESPEGYVAYSKATTVTGKLIFANFGTKKDFEDLKMPVNGSLVIVRAGKITFAEKVANAQSLDAIGVLIYMDRANFPIINADVPVFGHAHLGTGDPYTPGFPSFNHTQFPPSQSSGLPNIPVQTISRAGAEKLFGNMEQDCPLTWRTDFPCKLVSSPSKNVKLTVNNVLKEIKILNIFGVIKGFEEPDRYVIVGAQRDAWGPGAAKSSVGTSLLLNLAQILSDMVIKGQFKPSRSIVFASWSAGDFGAIGATEWLEGYLSSLHLKAFTYINLDKAVLGTSNFKVSASPLLYSLIEKMMQDVKNPVTGQSLYRDSNWINKVEKLSFDDAAFPFLAYSGIPAVSFCFCEDTDYPYLGTTMDTYDVLSKRVPQLNRMARAAAEVAGHLVIKLTIDFELNLNYEMYNDKILSFVREMNQFRVDIREMGLSLQWLYSARGDFFRATSRLTSDYRNVETRDKFVMREINDRIMKVEYHFLSPYVSPRESPFRHIFWGSGSHTLSALVEHLKLRQKNSSAFNQTLLKNQLALATWTIQGAANALSGDIWDIDNEF</sequence>
<name>TFR1_PIG</name>
<reference key="1">
    <citation type="journal article" date="2005" name="J. Anim. Breed. Genet.">
        <title>Inheritance of the F4ab, F4ac and F4ad E. coli receptors in swine and examination of four candidate genes for F4acR.</title>
        <authorList>
            <person name="Python P."/>
            <person name="Jorg H."/>
            <person name="Neuenschwander S."/>
            <person name="Asai-Coakwell M."/>
            <person name="Hagger C."/>
            <person name="Burgi E."/>
            <person name="Bertschinger H.U."/>
            <person name="Stranzinger G."/>
            <person name="Vogeli P."/>
        </authorList>
    </citation>
    <scope>NUCLEOTIDE SEQUENCE [MRNA]</scope>
    <source>
        <tissue>Small intestine</tissue>
    </source>
</reference>
<accession>Q8HZV3</accession>